<proteinExistence type="inferred from homology"/>
<keyword id="KW-0539">Nucleus</keyword>
<keyword id="KW-1185">Reference proteome</keyword>
<keyword id="KW-0677">Repeat</keyword>
<keyword id="KW-0690">Ribosome biogenesis</keyword>
<keyword id="KW-0698">rRNA processing</keyword>
<keyword id="KW-0853">WD repeat</keyword>
<evidence type="ECO:0000255" key="1">
    <source>
        <dbReference type="HAMAP-Rule" id="MF_03027"/>
    </source>
</evidence>
<evidence type="ECO:0000256" key="2">
    <source>
        <dbReference type="SAM" id="MobiDB-lite"/>
    </source>
</evidence>
<feature type="chain" id="PRO_0000370392" description="Ribosome biogenesis protein BOP1 homolog">
    <location>
        <begin position="1"/>
        <end position="865"/>
    </location>
</feature>
<feature type="repeat" description="WD 1">
    <location>
        <begin position="526"/>
        <end position="565"/>
    </location>
</feature>
<feature type="repeat" description="WD 2">
    <location>
        <begin position="567"/>
        <end position="607"/>
    </location>
</feature>
<feature type="repeat" description="WD 3">
    <location>
        <begin position="651"/>
        <end position="693"/>
    </location>
</feature>
<feature type="repeat" description="WD 4">
    <location>
        <begin position="696"/>
        <end position="734"/>
    </location>
</feature>
<feature type="repeat" description="WD 5">
    <location>
        <begin position="737"/>
        <end position="776"/>
    </location>
</feature>
<feature type="repeat" description="WD 6">
    <location>
        <begin position="780"/>
        <end position="819"/>
    </location>
</feature>
<feature type="repeat" description="WD 7">
    <location>
        <begin position="835"/>
        <end position="865"/>
    </location>
</feature>
<feature type="region of interest" description="Disordered" evidence="2">
    <location>
        <begin position="1"/>
        <end position="195"/>
    </location>
</feature>
<feature type="region of interest" description="Disordered" evidence="2">
    <location>
        <begin position="207"/>
        <end position="240"/>
    </location>
</feature>
<feature type="compositionally biased region" description="Acidic residues" evidence="2">
    <location>
        <begin position="30"/>
        <end position="44"/>
    </location>
</feature>
<feature type="compositionally biased region" description="Acidic residues" evidence="2">
    <location>
        <begin position="57"/>
        <end position="79"/>
    </location>
</feature>
<feature type="compositionally biased region" description="Acidic residues" evidence="2">
    <location>
        <begin position="87"/>
        <end position="159"/>
    </location>
</feature>
<feature type="compositionally biased region" description="Basic and acidic residues" evidence="2">
    <location>
        <begin position="160"/>
        <end position="180"/>
    </location>
</feature>
<protein>
    <recommendedName>
        <fullName evidence="1">Ribosome biogenesis protein BOP1 homolog</fullName>
    </recommendedName>
</protein>
<name>BOP1_ANOGA</name>
<dbReference type="EMBL" id="AAAB01008807">
    <property type="protein sequence ID" value="EAA04116.5"/>
    <property type="molecule type" value="Genomic_DNA"/>
</dbReference>
<dbReference type="RefSeq" id="XP_308633.4">
    <property type="nucleotide sequence ID" value="XM_308633.4"/>
</dbReference>
<dbReference type="SMR" id="Q7PTC5"/>
<dbReference type="FunCoup" id="Q7PTC5">
    <property type="interactions" value="1439"/>
</dbReference>
<dbReference type="STRING" id="7165.Q7PTC5"/>
<dbReference type="PaxDb" id="7165-AGAP007128-PA"/>
<dbReference type="EnsemblMetazoa" id="AGAP007128-RA">
    <property type="protein sequence ID" value="AGAP007128-PA"/>
    <property type="gene ID" value="AGAP007128"/>
</dbReference>
<dbReference type="GeneID" id="1269978"/>
<dbReference type="KEGG" id="aga:1269978"/>
<dbReference type="VEuPathDB" id="VectorBase:AGAMI1_005211"/>
<dbReference type="VEuPathDB" id="VectorBase:AGAP007128"/>
<dbReference type="eggNOG" id="KOG0650">
    <property type="taxonomic scope" value="Eukaryota"/>
</dbReference>
<dbReference type="HOGENOM" id="CLU_011390_1_0_1"/>
<dbReference type="InParanoid" id="Q7PTC5"/>
<dbReference type="OMA" id="MRPAKGE"/>
<dbReference type="PhylomeDB" id="Q7PTC5"/>
<dbReference type="Proteomes" id="UP000007062">
    <property type="component" value="Chromosome 2L"/>
</dbReference>
<dbReference type="GO" id="GO:0005654">
    <property type="term" value="C:nucleoplasm"/>
    <property type="evidence" value="ECO:0007669"/>
    <property type="project" value="UniProtKB-SubCell"/>
</dbReference>
<dbReference type="GO" id="GO:0070545">
    <property type="term" value="C:PeBoW complex"/>
    <property type="evidence" value="ECO:0000318"/>
    <property type="project" value="GO_Central"/>
</dbReference>
<dbReference type="GO" id="GO:0030687">
    <property type="term" value="C:preribosome, large subunit precursor"/>
    <property type="evidence" value="ECO:0000318"/>
    <property type="project" value="GO_Central"/>
</dbReference>
<dbReference type="GO" id="GO:0043021">
    <property type="term" value="F:ribonucleoprotein complex binding"/>
    <property type="evidence" value="ECO:0000318"/>
    <property type="project" value="GO_Central"/>
</dbReference>
<dbReference type="GO" id="GO:0000466">
    <property type="term" value="P:maturation of 5.8S rRNA from tricistronic rRNA transcript (SSU-rRNA, 5.8S rRNA, LSU-rRNA)"/>
    <property type="evidence" value="ECO:0007669"/>
    <property type="project" value="UniProtKB-UniRule"/>
</dbReference>
<dbReference type="GO" id="GO:0000463">
    <property type="term" value="P:maturation of LSU-rRNA from tricistronic rRNA transcript (SSU-rRNA, 5.8S rRNA, LSU-rRNA)"/>
    <property type="evidence" value="ECO:0000318"/>
    <property type="project" value="GO_Central"/>
</dbReference>
<dbReference type="FunFam" id="2.130.10.10:FF:000061">
    <property type="entry name" value="Ribosome biogenesis protein BOP1 homolog"/>
    <property type="match status" value="1"/>
</dbReference>
<dbReference type="Gene3D" id="2.130.10.10">
    <property type="entry name" value="YVTN repeat-like/Quinoprotein amine dehydrogenase"/>
    <property type="match status" value="1"/>
</dbReference>
<dbReference type="HAMAP" id="MF_03027">
    <property type="entry name" value="BOP1"/>
    <property type="match status" value="1"/>
</dbReference>
<dbReference type="InterPro" id="IPR028598">
    <property type="entry name" value="BOP1/Erb1"/>
</dbReference>
<dbReference type="InterPro" id="IPR012953">
    <property type="entry name" value="BOP1_N_dom"/>
</dbReference>
<dbReference type="InterPro" id="IPR015943">
    <property type="entry name" value="WD40/YVTN_repeat-like_dom_sf"/>
</dbReference>
<dbReference type="InterPro" id="IPR019775">
    <property type="entry name" value="WD40_repeat_CS"/>
</dbReference>
<dbReference type="InterPro" id="IPR036322">
    <property type="entry name" value="WD40_repeat_dom_sf"/>
</dbReference>
<dbReference type="InterPro" id="IPR001680">
    <property type="entry name" value="WD40_rpt"/>
</dbReference>
<dbReference type="PANTHER" id="PTHR17605:SF0">
    <property type="entry name" value="RIBOSOME BIOGENESIS PROTEIN BOP1"/>
    <property type="match status" value="1"/>
</dbReference>
<dbReference type="PANTHER" id="PTHR17605">
    <property type="entry name" value="RIBOSOME BIOGENESIS PROTEIN BOP1 BLOCK OF PROLIFERATION 1 PROTEIN"/>
    <property type="match status" value="1"/>
</dbReference>
<dbReference type="Pfam" id="PF08145">
    <property type="entry name" value="BOP1NT"/>
    <property type="match status" value="1"/>
</dbReference>
<dbReference type="Pfam" id="PF00400">
    <property type="entry name" value="WD40"/>
    <property type="match status" value="3"/>
</dbReference>
<dbReference type="SMART" id="SM01035">
    <property type="entry name" value="BOP1NT"/>
    <property type="match status" value="1"/>
</dbReference>
<dbReference type="SMART" id="SM00320">
    <property type="entry name" value="WD40"/>
    <property type="match status" value="7"/>
</dbReference>
<dbReference type="SUPFAM" id="SSF50978">
    <property type="entry name" value="WD40 repeat-like"/>
    <property type="match status" value="1"/>
</dbReference>
<dbReference type="PROSITE" id="PS00678">
    <property type="entry name" value="WD_REPEATS_1"/>
    <property type="match status" value="1"/>
</dbReference>
<dbReference type="PROSITE" id="PS50082">
    <property type="entry name" value="WD_REPEATS_2"/>
    <property type="match status" value="1"/>
</dbReference>
<dbReference type="PROSITE" id="PS50294">
    <property type="entry name" value="WD_REPEATS_REGION"/>
    <property type="match status" value="2"/>
</dbReference>
<sequence>MVANKERAIKRKASEGGAKPEPITSKQEPLDESNDEDNSNESDYESDKENLLGSIENEGEDSSDSDGEYATDDDEDDVLSFESLNSDGEEEDEEEDAGTTLEEVEREAEEDDDEEDGEDDEEADSADDVNSDSSPEEDEGDLEDSSDEELEEEEEEEEAKENGKEKPAKAKAERKQREEQFESDDEPLPDDLKLGRIEDVLGTGEKKTRGLGVFPPVPKRKGKAAQDEYAAGDTSDEEDIRNTVGNIPMHWYDEYKHVGYDWDAKKIIKAKKGDAIDDFLQRMEDPNFWRTVTDPQTGQKVVLSDEDIGLIKRIMSGRNPDAEYDDYEPFIEWFTSEVEKMPIRNIPESKRSFLPSKAEKHKIGRYVHALKMGWMKTMAEKRRLEAIRRQPKFYMLWTTDHGKEEMRRIHDHVAAPKRMLPGHAESYNPPPEYLFDEKELEEWNKLANQPWKRKRAYVPQKYNSLREVPGYTRYVKERFLRCLDLYLAPRMRRSRVAVGAEYLIPKLPSPRDLQPFPTLQNLIYTGHTSLIRCISVEPKGEYIVTGSDDMTVKIWEISTARCIRTIPTGDIVRSVAWCPNSKISLVAAASGKRVLLINPKVGDYMLVKKTDDLLTEAPRSDTVDSERIRSAVQWGEVTEEEKKLGVRIVITHFREVRQVTWHGRGDYFATVMPDGAYRSVMIHQLSKRRSQVPFSKSKGLIQCVLFHPIKPCLFVATQRHIRVYDLVKQLMMKKLYPGCKWISSMAIHPKGDNLLIGTYEKRLMWFDLDLSTKPYQQLRIHNAAIRSVAFHPRYPLFASAGDDRSVIVSHGMVYNDLLQNPLIVPLRRLKNHAVVNDFSVFDVVFHPTQPWVFSSGADNTVRLYT</sequence>
<comment type="function">
    <text evidence="1">Required for maturation of ribosomal RNAs and formation of the large ribosomal subunit.</text>
</comment>
<comment type="subcellular location">
    <subcellularLocation>
        <location evidence="1">Nucleus</location>
        <location evidence="1">Nucleolus</location>
    </subcellularLocation>
    <subcellularLocation>
        <location evidence="1">Nucleus</location>
        <location evidence="1">Nucleoplasm</location>
    </subcellularLocation>
</comment>
<comment type="similarity">
    <text evidence="1">Belongs to the WD repeat BOP1/ERB1 family.</text>
</comment>
<reference key="1">
    <citation type="journal article" date="2002" name="Science">
        <title>The genome sequence of the malaria mosquito Anopheles gambiae.</title>
        <authorList>
            <person name="Holt R.A."/>
            <person name="Subramanian G.M."/>
            <person name="Halpern A."/>
            <person name="Sutton G.G."/>
            <person name="Charlab R."/>
            <person name="Nusskern D.R."/>
            <person name="Wincker P."/>
            <person name="Clark A.G."/>
            <person name="Ribeiro J.M.C."/>
            <person name="Wides R."/>
            <person name="Salzberg S.L."/>
            <person name="Loftus B.J."/>
            <person name="Yandell M.D."/>
            <person name="Majoros W.H."/>
            <person name="Rusch D.B."/>
            <person name="Lai Z."/>
            <person name="Kraft C.L."/>
            <person name="Abril J.F."/>
            <person name="Anthouard V."/>
            <person name="Arensburger P."/>
            <person name="Atkinson P.W."/>
            <person name="Baden H."/>
            <person name="de Berardinis V."/>
            <person name="Baldwin D."/>
            <person name="Benes V."/>
            <person name="Biedler J."/>
            <person name="Blass C."/>
            <person name="Bolanos R."/>
            <person name="Boscus D."/>
            <person name="Barnstead M."/>
            <person name="Cai S."/>
            <person name="Center A."/>
            <person name="Chaturverdi K."/>
            <person name="Christophides G.K."/>
            <person name="Chrystal M.A.M."/>
            <person name="Clamp M."/>
            <person name="Cravchik A."/>
            <person name="Curwen V."/>
            <person name="Dana A."/>
            <person name="Delcher A."/>
            <person name="Dew I."/>
            <person name="Evans C.A."/>
            <person name="Flanigan M."/>
            <person name="Grundschober-Freimoser A."/>
            <person name="Friedli L."/>
            <person name="Gu Z."/>
            <person name="Guan P."/>
            <person name="Guigo R."/>
            <person name="Hillenmeyer M.E."/>
            <person name="Hladun S.L."/>
            <person name="Hogan J.R."/>
            <person name="Hong Y.S."/>
            <person name="Hoover J."/>
            <person name="Jaillon O."/>
            <person name="Ke Z."/>
            <person name="Kodira C.D."/>
            <person name="Kokoza E."/>
            <person name="Koutsos A."/>
            <person name="Letunic I."/>
            <person name="Levitsky A.A."/>
            <person name="Liang Y."/>
            <person name="Lin J.-J."/>
            <person name="Lobo N.F."/>
            <person name="Lopez J.R."/>
            <person name="Malek J.A."/>
            <person name="McIntosh T.C."/>
            <person name="Meister S."/>
            <person name="Miller J.R."/>
            <person name="Mobarry C."/>
            <person name="Mongin E."/>
            <person name="Murphy S.D."/>
            <person name="O'Brochta D.A."/>
            <person name="Pfannkoch C."/>
            <person name="Qi R."/>
            <person name="Regier M.A."/>
            <person name="Remington K."/>
            <person name="Shao H."/>
            <person name="Sharakhova M.V."/>
            <person name="Sitter C.D."/>
            <person name="Shetty J."/>
            <person name="Smith T.J."/>
            <person name="Strong R."/>
            <person name="Sun J."/>
            <person name="Thomasova D."/>
            <person name="Ton L.Q."/>
            <person name="Topalis P."/>
            <person name="Tu Z.J."/>
            <person name="Unger M.F."/>
            <person name="Walenz B."/>
            <person name="Wang A.H."/>
            <person name="Wang J."/>
            <person name="Wang M."/>
            <person name="Wang X."/>
            <person name="Woodford K.J."/>
            <person name="Wortman J.R."/>
            <person name="Wu M."/>
            <person name="Yao A."/>
            <person name="Zdobnov E.M."/>
            <person name="Zhang H."/>
            <person name="Zhao Q."/>
            <person name="Zhao S."/>
            <person name="Zhu S.C."/>
            <person name="Zhimulev I."/>
            <person name="Coluzzi M."/>
            <person name="della Torre A."/>
            <person name="Roth C.W."/>
            <person name="Louis C."/>
            <person name="Kalush F."/>
            <person name="Mural R.J."/>
            <person name="Myers E.W."/>
            <person name="Adams M.D."/>
            <person name="Smith H.O."/>
            <person name="Broder S."/>
            <person name="Gardner M.J."/>
            <person name="Fraser C.M."/>
            <person name="Birney E."/>
            <person name="Bork P."/>
            <person name="Brey P.T."/>
            <person name="Venter J.C."/>
            <person name="Weissenbach J."/>
            <person name="Kafatos F.C."/>
            <person name="Collins F.H."/>
            <person name="Hoffman S.L."/>
        </authorList>
    </citation>
    <scope>NUCLEOTIDE SEQUENCE [LARGE SCALE GENOMIC DNA]</scope>
    <source>
        <strain>PEST</strain>
    </source>
</reference>
<organism>
    <name type="scientific">Anopheles gambiae</name>
    <name type="common">African malaria mosquito</name>
    <dbReference type="NCBI Taxonomy" id="7165"/>
    <lineage>
        <taxon>Eukaryota</taxon>
        <taxon>Metazoa</taxon>
        <taxon>Ecdysozoa</taxon>
        <taxon>Arthropoda</taxon>
        <taxon>Hexapoda</taxon>
        <taxon>Insecta</taxon>
        <taxon>Pterygota</taxon>
        <taxon>Neoptera</taxon>
        <taxon>Endopterygota</taxon>
        <taxon>Diptera</taxon>
        <taxon>Nematocera</taxon>
        <taxon>Culicoidea</taxon>
        <taxon>Culicidae</taxon>
        <taxon>Anophelinae</taxon>
        <taxon>Anopheles</taxon>
    </lineage>
</organism>
<gene>
    <name type="ORF">AGAP007128</name>
</gene>
<accession>Q7PTC5</accession>